<accession>P26289</accession>
<geneLocation type="chloroplast"/>
<comment type="function">
    <text evidence="1">NDH shuttles electrons from NAD(P)H:plastoquinone, via FMN and iron-sulfur (Fe-S) centers, to quinones in the photosynthetic chain and possibly in a chloroplast respiratory chain. The immediate electron acceptor for the enzyme in this species is believed to be plastoquinone. Couples the redox reaction to proton translocation, and thus conserves the redox energy in a proton gradient.</text>
</comment>
<comment type="catalytic activity">
    <reaction evidence="1">
        <text>a plastoquinone + NADH + (n+1) H(+)(in) = a plastoquinol + NAD(+) + n H(+)(out)</text>
        <dbReference type="Rhea" id="RHEA:42608"/>
        <dbReference type="Rhea" id="RHEA-COMP:9561"/>
        <dbReference type="Rhea" id="RHEA-COMP:9562"/>
        <dbReference type="ChEBI" id="CHEBI:15378"/>
        <dbReference type="ChEBI" id="CHEBI:17757"/>
        <dbReference type="ChEBI" id="CHEBI:57540"/>
        <dbReference type="ChEBI" id="CHEBI:57945"/>
        <dbReference type="ChEBI" id="CHEBI:62192"/>
    </reaction>
</comment>
<comment type="catalytic activity">
    <reaction evidence="1">
        <text>a plastoquinone + NADPH + (n+1) H(+)(in) = a plastoquinol + NADP(+) + n H(+)(out)</text>
        <dbReference type="Rhea" id="RHEA:42612"/>
        <dbReference type="Rhea" id="RHEA-COMP:9561"/>
        <dbReference type="Rhea" id="RHEA-COMP:9562"/>
        <dbReference type="ChEBI" id="CHEBI:15378"/>
        <dbReference type="ChEBI" id="CHEBI:17757"/>
        <dbReference type="ChEBI" id="CHEBI:57783"/>
        <dbReference type="ChEBI" id="CHEBI:58349"/>
        <dbReference type="ChEBI" id="CHEBI:62192"/>
    </reaction>
</comment>
<comment type="subunit">
    <text evidence="1">NDH is composed of at least 16 different subunits, 5 of which are encoded in the nucleus.</text>
</comment>
<comment type="subcellular location">
    <subcellularLocation>
        <location evidence="1">Plastid</location>
        <location evidence="1">Chloroplast thylakoid membrane</location>
        <topology evidence="1">Multi-pass membrane protein</topology>
    </subcellularLocation>
</comment>
<comment type="similarity">
    <text evidence="1">Belongs to the complex I subunit 4L family.</text>
</comment>
<comment type="caution">
    <text evidence="3">Was originally thought to originate from Synechocystis PCC6803.</text>
</comment>
<name>NU4LC_ARATH</name>
<feature type="chain" id="PRO_0000118504" description="NAD(P)H-quinone oxidoreductase subunit 4L, chloroplastic">
    <location>
        <begin position="1"/>
        <end position="101"/>
    </location>
</feature>
<feature type="transmembrane region" description="Helical" evidence="1">
    <location>
        <begin position="2"/>
        <end position="22"/>
    </location>
</feature>
<feature type="transmembrane region" description="Helical" evidence="1">
    <location>
        <begin position="32"/>
        <end position="52"/>
    </location>
</feature>
<feature type="transmembrane region" description="Helical" evidence="1">
    <location>
        <begin position="61"/>
        <end position="81"/>
    </location>
</feature>
<feature type="sequence conflict" description="In Ref. 2; CAA37835." evidence="2" ref="2">
    <original>L</original>
    <variation>R</variation>
    <location>
        <position position="21"/>
    </location>
</feature>
<dbReference type="EC" id="7.1.1.-" evidence="1"/>
<dbReference type="EMBL" id="AP000423">
    <property type="protein sequence ID" value="BAA84439.1"/>
    <property type="molecule type" value="Genomic_DNA"/>
</dbReference>
<dbReference type="EMBL" id="X53842">
    <property type="protein sequence ID" value="CAA37835.1"/>
    <property type="molecule type" value="Genomic_DNA"/>
</dbReference>
<dbReference type="RefSeq" id="NP_051111.1">
    <property type="nucleotide sequence ID" value="NC_000932.1"/>
</dbReference>
<dbReference type="PDB" id="7WFF">
    <property type="method" value="EM"/>
    <property type="resolution" value="3.59 A"/>
    <property type="chains" value="E=1-101"/>
</dbReference>
<dbReference type="PDB" id="7WG5">
    <property type="method" value="EM"/>
    <property type="resolution" value="3.89 A"/>
    <property type="chains" value="E=1-101"/>
</dbReference>
<dbReference type="PDBsum" id="7WFF"/>
<dbReference type="PDBsum" id="7WG5"/>
<dbReference type="EMDB" id="EMD-32464"/>
<dbReference type="EMDB" id="EMD-32477"/>
<dbReference type="SMR" id="P26289"/>
<dbReference type="FunCoup" id="P26289">
    <property type="interactions" value="83"/>
</dbReference>
<dbReference type="STRING" id="3702.P26289"/>
<dbReference type="TCDB" id="3.D.1.8.1">
    <property type="family name" value="the h+ or na+-translocating nadh dehydrogenase (ndh) family"/>
</dbReference>
<dbReference type="PaxDb" id="3702-ATCG01070.1"/>
<dbReference type="ProteomicsDB" id="249429"/>
<dbReference type="EnsemblPlants" id="ATCG01070.1">
    <property type="protein sequence ID" value="ATCG01070.1"/>
    <property type="gene ID" value="ATCG01070"/>
</dbReference>
<dbReference type="GeneID" id="844741"/>
<dbReference type="Gramene" id="ATCG01070.1">
    <property type="protein sequence ID" value="ATCG01070.1"/>
    <property type="gene ID" value="ATCG01070"/>
</dbReference>
<dbReference type="KEGG" id="ath:ArthCp076"/>
<dbReference type="Araport" id="ATCG01070"/>
<dbReference type="TAIR" id="ATCG01070">
    <property type="gene designation" value="NDHE"/>
</dbReference>
<dbReference type="eggNOG" id="KOG4669">
    <property type="taxonomic scope" value="Eukaryota"/>
</dbReference>
<dbReference type="HOGENOM" id="CLU_144724_1_1_1"/>
<dbReference type="InParanoid" id="P26289"/>
<dbReference type="OMA" id="FDVWLSR"/>
<dbReference type="BioCyc" id="ARA:ATCG01070-MONOMER"/>
<dbReference type="PRO" id="PR:P26289"/>
<dbReference type="Proteomes" id="UP000006548">
    <property type="component" value="Chloroplast Pltd"/>
</dbReference>
<dbReference type="ExpressionAtlas" id="P26289">
    <property type="expression patterns" value="baseline and differential"/>
</dbReference>
<dbReference type="GO" id="GO:0009507">
    <property type="term" value="C:chloroplast"/>
    <property type="evidence" value="ECO:0000304"/>
    <property type="project" value="TAIR"/>
</dbReference>
<dbReference type="GO" id="GO:0009534">
    <property type="term" value="C:chloroplast thylakoid"/>
    <property type="evidence" value="ECO:0007005"/>
    <property type="project" value="TAIR"/>
</dbReference>
<dbReference type="GO" id="GO:0009535">
    <property type="term" value="C:chloroplast thylakoid membrane"/>
    <property type="evidence" value="ECO:0007005"/>
    <property type="project" value="TAIR"/>
</dbReference>
<dbReference type="GO" id="GO:0009536">
    <property type="term" value="C:plastid"/>
    <property type="evidence" value="ECO:0007005"/>
    <property type="project" value="TAIR"/>
</dbReference>
<dbReference type="GO" id="GO:0003959">
    <property type="term" value="F:NADPH dehydrogenase activity"/>
    <property type="evidence" value="ECO:0000304"/>
    <property type="project" value="TAIR"/>
</dbReference>
<dbReference type="GO" id="GO:0016655">
    <property type="term" value="F:oxidoreductase activity, acting on NAD(P)H, quinone or similar compound as acceptor"/>
    <property type="evidence" value="ECO:0007669"/>
    <property type="project" value="UniProtKB-UniRule"/>
</dbReference>
<dbReference type="GO" id="GO:0048038">
    <property type="term" value="F:quinone binding"/>
    <property type="evidence" value="ECO:0007669"/>
    <property type="project" value="UniProtKB-KW"/>
</dbReference>
<dbReference type="GO" id="GO:0042773">
    <property type="term" value="P:ATP synthesis coupled electron transport"/>
    <property type="evidence" value="ECO:0007669"/>
    <property type="project" value="InterPro"/>
</dbReference>
<dbReference type="GO" id="GO:0019684">
    <property type="term" value="P:photosynthesis, light reaction"/>
    <property type="evidence" value="ECO:0007669"/>
    <property type="project" value="UniProtKB-UniRule"/>
</dbReference>
<dbReference type="GO" id="GO:0006744">
    <property type="term" value="P:ubiquinone biosynthetic process"/>
    <property type="evidence" value="ECO:0000304"/>
    <property type="project" value="TAIR"/>
</dbReference>
<dbReference type="FunFam" id="1.10.287.3510:FF:000001">
    <property type="entry name" value="NADH-quinone oxidoreductase subunit K"/>
    <property type="match status" value="1"/>
</dbReference>
<dbReference type="Gene3D" id="1.10.287.3510">
    <property type="match status" value="1"/>
</dbReference>
<dbReference type="HAMAP" id="MF_01456">
    <property type="entry name" value="NDH1_NuoK"/>
    <property type="match status" value="1"/>
</dbReference>
<dbReference type="InterPro" id="IPR001133">
    <property type="entry name" value="NADH_UbQ_OxRdtase_chain4L/K"/>
</dbReference>
<dbReference type="InterPro" id="IPR039428">
    <property type="entry name" value="NUOK/Mnh_C1-like"/>
</dbReference>
<dbReference type="NCBIfam" id="NF004320">
    <property type="entry name" value="PRK05715.1-2"/>
    <property type="match status" value="1"/>
</dbReference>
<dbReference type="NCBIfam" id="NF004322">
    <property type="entry name" value="PRK05715.1-4"/>
    <property type="match status" value="1"/>
</dbReference>
<dbReference type="NCBIfam" id="NF004323">
    <property type="entry name" value="PRK05715.1-5"/>
    <property type="match status" value="1"/>
</dbReference>
<dbReference type="PANTHER" id="PTHR11434:SF16">
    <property type="entry name" value="NADH-UBIQUINONE OXIDOREDUCTASE CHAIN 4L"/>
    <property type="match status" value="1"/>
</dbReference>
<dbReference type="PANTHER" id="PTHR11434">
    <property type="entry name" value="NADH-UBIQUINONE OXIDOREDUCTASE SUBUNIT ND4L"/>
    <property type="match status" value="1"/>
</dbReference>
<dbReference type="Pfam" id="PF00420">
    <property type="entry name" value="Oxidored_q2"/>
    <property type="match status" value="1"/>
</dbReference>
<keyword id="KW-0002">3D-structure</keyword>
<keyword id="KW-0150">Chloroplast</keyword>
<keyword id="KW-0472">Membrane</keyword>
<keyword id="KW-0520">NAD</keyword>
<keyword id="KW-0521">NADP</keyword>
<keyword id="KW-0934">Plastid</keyword>
<keyword id="KW-0618">Plastoquinone</keyword>
<keyword id="KW-0874">Quinone</keyword>
<keyword id="KW-1185">Reference proteome</keyword>
<keyword id="KW-0793">Thylakoid</keyword>
<keyword id="KW-1278">Translocase</keyword>
<keyword id="KW-0812">Transmembrane</keyword>
<keyword id="KW-1133">Transmembrane helix</keyword>
<keyword id="KW-0813">Transport</keyword>
<protein>
    <recommendedName>
        <fullName evidence="1">NAD(P)H-quinone oxidoreductase subunit 4L, chloroplastic</fullName>
        <ecNumber evidence="1">7.1.1.-</ecNumber>
    </recommendedName>
    <alternativeName>
        <fullName evidence="1">NAD(P)H dehydrogenase subunit 4L</fullName>
    </alternativeName>
    <alternativeName>
        <fullName evidence="1">NADH-plastoquinone oxidoreductase subunit 4L</fullName>
    </alternativeName>
</protein>
<reference key="1">
    <citation type="journal article" date="1999" name="DNA Res.">
        <title>Complete structure of the chloroplast genome of Arabidopsis thaliana.</title>
        <authorList>
            <person name="Sato S."/>
            <person name="Nakamura Y."/>
            <person name="Kaneko T."/>
            <person name="Asamizu E."/>
            <person name="Tabata S."/>
        </authorList>
    </citation>
    <scope>NUCLEOTIDE SEQUENCE [LARGE SCALE GENOMIC DNA]</scope>
    <source>
        <strain>cv. Columbia</strain>
    </source>
</reference>
<reference key="2">
    <citation type="journal article" date="1991" name="Plant Mol. Biol.">
        <title>Partial conservation of the 5' ndhE-psaC-ndhD 3' gene arrangement of chloroplasts in the cyanobacterium Synechocystis sp. PCC 6803: implications for NDH-D function in cyanobacteria and chloroplasts.</title>
        <authorList>
            <person name="Anderson S.L."/>
            <person name="McIntosh L."/>
        </authorList>
    </citation>
    <scope>NUCLEOTIDE SEQUENCE [GENOMIC DNA] OF 21-101</scope>
</reference>
<organism>
    <name type="scientific">Arabidopsis thaliana</name>
    <name type="common">Mouse-ear cress</name>
    <dbReference type="NCBI Taxonomy" id="3702"/>
    <lineage>
        <taxon>Eukaryota</taxon>
        <taxon>Viridiplantae</taxon>
        <taxon>Streptophyta</taxon>
        <taxon>Embryophyta</taxon>
        <taxon>Tracheophyta</taxon>
        <taxon>Spermatophyta</taxon>
        <taxon>Magnoliopsida</taxon>
        <taxon>eudicotyledons</taxon>
        <taxon>Gunneridae</taxon>
        <taxon>Pentapetalae</taxon>
        <taxon>rosids</taxon>
        <taxon>malvids</taxon>
        <taxon>Brassicales</taxon>
        <taxon>Brassicaceae</taxon>
        <taxon>Camelineae</taxon>
        <taxon>Arabidopsis</taxon>
    </lineage>
</organism>
<gene>
    <name evidence="1" type="primary">ndhE</name>
    <name type="ordered locus">AtCg01070</name>
</gene>
<proteinExistence type="evidence at protein level"/>
<sequence>MILEHVLVLSAYLFLIGLYGLITSRNMVRALMCLELILNAVNMNFVTFSDFFDNSQLKGEIFCIFVIAIAAAEAAIGLAIVSSIYRNRKSIRINQSTLLNK</sequence>
<evidence type="ECO:0000255" key="1">
    <source>
        <dbReference type="HAMAP-Rule" id="MF_01456"/>
    </source>
</evidence>
<evidence type="ECO:0000305" key="2"/>
<evidence type="ECO:0000305" key="3">
    <source>
    </source>
</evidence>